<evidence type="ECO:0000255" key="1">
    <source>
        <dbReference type="HAMAP-Rule" id="MF_00171"/>
    </source>
</evidence>
<organism>
    <name type="scientific">Anaplasma phagocytophilum (strain HZ)</name>
    <dbReference type="NCBI Taxonomy" id="212042"/>
    <lineage>
        <taxon>Bacteria</taxon>
        <taxon>Pseudomonadati</taxon>
        <taxon>Pseudomonadota</taxon>
        <taxon>Alphaproteobacteria</taxon>
        <taxon>Rickettsiales</taxon>
        <taxon>Anaplasmataceae</taxon>
        <taxon>Anaplasma</taxon>
        <taxon>phagocytophilum group</taxon>
    </lineage>
</organism>
<protein>
    <recommendedName>
        <fullName evidence="1">tRNA pseudouridine synthase A</fullName>
        <ecNumber evidence="1">5.4.99.12</ecNumber>
    </recommendedName>
    <alternativeName>
        <fullName evidence="1">tRNA pseudouridine(38-40) synthase</fullName>
    </alternativeName>
    <alternativeName>
        <fullName evidence="1">tRNA pseudouridylate synthase I</fullName>
    </alternativeName>
    <alternativeName>
        <fullName evidence="1">tRNA-uridine isomerase I</fullName>
    </alternativeName>
</protein>
<accession>Q2GKK4</accession>
<proteinExistence type="inferred from homology"/>
<keyword id="KW-0413">Isomerase</keyword>
<keyword id="KW-0819">tRNA processing</keyword>
<feature type="chain" id="PRO_1000017037" description="tRNA pseudouridine synthase A">
    <location>
        <begin position="1"/>
        <end position="246"/>
    </location>
</feature>
<feature type="active site" description="Nucleophile" evidence="1">
    <location>
        <position position="53"/>
    </location>
</feature>
<feature type="binding site" evidence="1">
    <location>
        <position position="112"/>
    </location>
    <ligand>
        <name>substrate</name>
    </ligand>
</feature>
<name>TRUA_ANAPZ</name>
<reference key="1">
    <citation type="journal article" date="2006" name="PLoS Genet.">
        <title>Comparative genomics of emerging human ehrlichiosis agents.</title>
        <authorList>
            <person name="Dunning Hotopp J.C."/>
            <person name="Lin M."/>
            <person name="Madupu R."/>
            <person name="Crabtree J."/>
            <person name="Angiuoli S.V."/>
            <person name="Eisen J.A."/>
            <person name="Seshadri R."/>
            <person name="Ren Q."/>
            <person name="Wu M."/>
            <person name="Utterback T.R."/>
            <person name="Smith S."/>
            <person name="Lewis M."/>
            <person name="Khouri H."/>
            <person name="Zhang C."/>
            <person name="Niu H."/>
            <person name="Lin Q."/>
            <person name="Ohashi N."/>
            <person name="Zhi N."/>
            <person name="Nelson W.C."/>
            <person name="Brinkac L.M."/>
            <person name="Dodson R.J."/>
            <person name="Rosovitz M.J."/>
            <person name="Sundaram J.P."/>
            <person name="Daugherty S.C."/>
            <person name="Davidsen T."/>
            <person name="Durkin A.S."/>
            <person name="Gwinn M.L."/>
            <person name="Haft D.H."/>
            <person name="Selengut J.D."/>
            <person name="Sullivan S.A."/>
            <person name="Zafar N."/>
            <person name="Zhou L."/>
            <person name="Benahmed F."/>
            <person name="Forberger H."/>
            <person name="Halpin R."/>
            <person name="Mulligan S."/>
            <person name="Robinson J."/>
            <person name="White O."/>
            <person name="Rikihisa Y."/>
            <person name="Tettelin H."/>
        </authorList>
    </citation>
    <scope>NUCLEOTIDE SEQUENCE [LARGE SCALE GENOMIC DNA]</scope>
    <source>
        <strain>HZ</strain>
    </source>
</reference>
<dbReference type="EC" id="5.4.99.12" evidence="1"/>
<dbReference type="EMBL" id="CP000235">
    <property type="protein sequence ID" value="ABD44026.1"/>
    <property type="molecule type" value="Genomic_DNA"/>
</dbReference>
<dbReference type="RefSeq" id="WP_011450619.1">
    <property type="nucleotide sequence ID" value="NC_007797.1"/>
</dbReference>
<dbReference type="SMR" id="Q2GKK4"/>
<dbReference type="STRING" id="212042.APH_0502"/>
<dbReference type="PaxDb" id="212042-APH_0502"/>
<dbReference type="EnsemblBacteria" id="ABD44026">
    <property type="protein sequence ID" value="ABD44026"/>
    <property type="gene ID" value="APH_0502"/>
</dbReference>
<dbReference type="GeneID" id="92748355"/>
<dbReference type="KEGG" id="aph:APH_0502"/>
<dbReference type="eggNOG" id="COG0101">
    <property type="taxonomic scope" value="Bacteria"/>
</dbReference>
<dbReference type="HOGENOM" id="CLU_014673_0_2_5"/>
<dbReference type="Proteomes" id="UP000001943">
    <property type="component" value="Chromosome"/>
</dbReference>
<dbReference type="GO" id="GO:0003723">
    <property type="term" value="F:RNA binding"/>
    <property type="evidence" value="ECO:0007669"/>
    <property type="project" value="InterPro"/>
</dbReference>
<dbReference type="GO" id="GO:0160147">
    <property type="term" value="F:tRNA pseudouridine(38-40) synthase activity"/>
    <property type="evidence" value="ECO:0007669"/>
    <property type="project" value="UniProtKB-EC"/>
</dbReference>
<dbReference type="GO" id="GO:0031119">
    <property type="term" value="P:tRNA pseudouridine synthesis"/>
    <property type="evidence" value="ECO:0007669"/>
    <property type="project" value="UniProtKB-UniRule"/>
</dbReference>
<dbReference type="CDD" id="cd02570">
    <property type="entry name" value="PseudoU_synth_EcTruA"/>
    <property type="match status" value="1"/>
</dbReference>
<dbReference type="FunFam" id="3.30.70.580:FF:000001">
    <property type="entry name" value="tRNA pseudouridine synthase A"/>
    <property type="match status" value="1"/>
</dbReference>
<dbReference type="Gene3D" id="3.30.70.660">
    <property type="entry name" value="Pseudouridine synthase I, catalytic domain, C-terminal subdomain"/>
    <property type="match status" value="1"/>
</dbReference>
<dbReference type="Gene3D" id="3.30.70.580">
    <property type="entry name" value="Pseudouridine synthase I, catalytic domain, N-terminal subdomain"/>
    <property type="match status" value="1"/>
</dbReference>
<dbReference type="HAMAP" id="MF_00171">
    <property type="entry name" value="TruA"/>
    <property type="match status" value="1"/>
</dbReference>
<dbReference type="InterPro" id="IPR020103">
    <property type="entry name" value="PsdUridine_synth_cat_dom_sf"/>
</dbReference>
<dbReference type="InterPro" id="IPR001406">
    <property type="entry name" value="PsdUridine_synth_TruA"/>
</dbReference>
<dbReference type="InterPro" id="IPR020097">
    <property type="entry name" value="PsdUridine_synth_TruA_a/b_dom"/>
</dbReference>
<dbReference type="InterPro" id="IPR020095">
    <property type="entry name" value="PsdUridine_synth_TruA_C"/>
</dbReference>
<dbReference type="InterPro" id="IPR020094">
    <property type="entry name" value="TruA/RsuA/RluB/E/F_N"/>
</dbReference>
<dbReference type="NCBIfam" id="TIGR00071">
    <property type="entry name" value="hisT_truA"/>
    <property type="match status" value="1"/>
</dbReference>
<dbReference type="PANTHER" id="PTHR11142">
    <property type="entry name" value="PSEUDOURIDYLATE SYNTHASE"/>
    <property type="match status" value="1"/>
</dbReference>
<dbReference type="PANTHER" id="PTHR11142:SF0">
    <property type="entry name" value="TRNA PSEUDOURIDINE SYNTHASE-LIKE 1"/>
    <property type="match status" value="1"/>
</dbReference>
<dbReference type="Pfam" id="PF01416">
    <property type="entry name" value="PseudoU_synth_1"/>
    <property type="match status" value="2"/>
</dbReference>
<dbReference type="PIRSF" id="PIRSF001430">
    <property type="entry name" value="tRNA_psdUrid_synth"/>
    <property type="match status" value="1"/>
</dbReference>
<dbReference type="SUPFAM" id="SSF55120">
    <property type="entry name" value="Pseudouridine synthase"/>
    <property type="match status" value="1"/>
</dbReference>
<sequence>MRYKAVVEYEGTSFIGWQRQHGVVGKSVQESIERSIKEFCQQSVIVYAAGRTDAGVHATGQVVHFDLKVSREDYVIKNALNHYLRNEKVSILQLERVDEEFHARFSAKKRHYTYKISNREAPLCIDLMRMWHVPKRLNVENMREAASYIVGKHDFASFRAKDCQSKSSIKTVDSIDIIAAEEEININISAQSFLHKQVRITVGTFVECGMGLYPPAHVLEILEKKDRAAAGITAPAHGLYLTRVDY</sequence>
<gene>
    <name evidence="1" type="primary">truA</name>
    <name type="ordered locus">APH_0502</name>
</gene>
<comment type="function">
    <text evidence="1">Formation of pseudouridine at positions 38, 39 and 40 in the anticodon stem and loop of transfer RNAs.</text>
</comment>
<comment type="catalytic activity">
    <reaction evidence="1">
        <text>uridine(38/39/40) in tRNA = pseudouridine(38/39/40) in tRNA</text>
        <dbReference type="Rhea" id="RHEA:22376"/>
        <dbReference type="Rhea" id="RHEA-COMP:10085"/>
        <dbReference type="Rhea" id="RHEA-COMP:10087"/>
        <dbReference type="ChEBI" id="CHEBI:65314"/>
        <dbReference type="ChEBI" id="CHEBI:65315"/>
        <dbReference type="EC" id="5.4.99.12"/>
    </reaction>
</comment>
<comment type="subunit">
    <text evidence="1">Homodimer.</text>
</comment>
<comment type="similarity">
    <text evidence="1">Belongs to the tRNA pseudouridine synthase TruA family.</text>
</comment>